<feature type="chain" id="PRO_0000114661" description="Cytoplasmic dynein 1 intermediate chain">
    <location>
        <begin position="1"/>
        <end position="663"/>
    </location>
</feature>
<feature type="repeat" description="WD 1">
    <location>
        <begin position="311"/>
        <end position="360"/>
    </location>
</feature>
<feature type="repeat" description="WD 2">
    <location>
        <begin position="364"/>
        <end position="404"/>
    </location>
</feature>
<feature type="repeat" description="WD 3">
    <location>
        <begin position="413"/>
        <end position="454"/>
    </location>
</feature>
<feature type="repeat" description="WD 4">
    <location>
        <begin position="463"/>
        <end position="503"/>
    </location>
</feature>
<feature type="repeat" description="WD 5">
    <location>
        <begin position="508"/>
        <end position="553"/>
    </location>
</feature>
<feature type="repeat" description="WD 6">
    <location>
        <begin position="556"/>
        <end position="596"/>
    </location>
</feature>
<feature type="repeat" description="WD 7">
    <location>
        <begin position="602"/>
        <end position="641"/>
    </location>
</feature>
<feature type="region of interest" description="Disordered" evidence="2">
    <location>
        <begin position="17"/>
        <end position="52"/>
    </location>
</feature>
<feature type="region of interest" description="Disordered" evidence="2">
    <location>
        <begin position="75"/>
        <end position="107"/>
    </location>
</feature>
<feature type="compositionally biased region" description="Basic and acidic residues" evidence="2">
    <location>
        <begin position="17"/>
        <end position="37"/>
    </location>
</feature>
<feature type="compositionally biased region" description="Low complexity" evidence="2">
    <location>
        <begin position="75"/>
        <end position="85"/>
    </location>
</feature>
<feature type="compositionally biased region" description="Polar residues" evidence="2">
    <location>
        <begin position="86"/>
        <end position="99"/>
    </location>
</feature>
<feature type="splice variant" id="VSP_001345" description="In isoform 1a." evidence="6">
    <original>VLSCHSSPLSGYMEDWWRPRKAHATDYYDEYNLNPGLEWEDEFT</original>
    <variation>AHATDYYVLAFDAQG</variation>
    <location>
        <begin position="144"/>
        <end position="187"/>
    </location>
</feature>
<feature type="splice variant" id="VSP_001346" description="In isoform 1b." evidence="6 7">
    <original>VLSCHSSPLSGYMEDWWRPRKAHATDYYDEYNLNPGLEWEDEFT</original>
    <variation>AHATDYYG</variation>
    <location>
        <begin position="144"/>
        <end position="187"/>
    </location>
</feature>
<feature type="splice variant" id="VSP_001347" description="In isoform 1c." evidence="6">
    <original>VLSCHSSPLSGYMEDWWRPRKAHATDYYDEYNLNPGLEWEDEFT</original>
    <variation>AHATDYY</variation>
    <location>
        <begin position="144"/>
        <end position="187"/>
    </location>
</feature>
<feature type="splice variant" id="VSP_001342" description="In isoform 3a and isoform 3b." evidence="6">
    <location>
        <begin position="144"/>
        <end position="171"/>
    </location>
</feature>
<feature type="splice variant" id="VSP_007686" description="In isoform 2a, isoform 2b and isoform 2c." evidence="5 6">
    <location>
        <begin position="144"/>
        <end position="164"/>
    </location>
</feature>
<feature type="splice variant" id="VSP_007685" description="In isoform 5b." evidence="6">
    <location>
        <begin position="144"/>
        <end position="153"/>
    </location>
</feature>
<feature type="splice variant" id="VSP_001343" description="In isoform 4." evidence="6">
    <original>SCHSSPLSGYMEDWWRPRKAHATDYYDEYNLNPGLEWEDEFT</original>
    <variation>AFDAQG</variation>
    <location>
        <begin position="146"/>
        <end position="187"/>
    </location>
</feature>
<feature type="splice variant" id="VSP_001348" description="In isoform 2a and isoform 3a." evidence="6">
    <original>T</original>
    <variation>TG</variation>
    <location>
        <position position="187"/>
    </location>
</feature>
<feature type="splice variant" id="VSP_007687" description="In isoform 2c." evidence="6">
    <original>T</original>
    <variation>TVLAFDAQG</variation>
    <location>
        <position position="187"/>
    </location>
</feature>
<feature type="sequence conflict" description="In Ref. 1; AAC78306/AAC70933/AAC70934/AAC70935/AAC70936/AAC70937/AAC70938/AAC70939/AAC70940/AAC70941/AAC70942/AAC70943." evidence="8" ref="1">
    <original>D</original>
    <variation>G</variation>
    <location>
        <position position="47"/>
    </location>
</feature>
<feature type="sequence conflict" description="In Ref. 6; AAB51185." evidence="8" ref="6">
    <original>GGNGDVL</original>
    <variation>AETAMV</variation>
    <location>
        <begin position="139"/>
        <end position="145"/>
    </location>
</feature>
<feature type="sequence conflict" description="In Ref. 6; AAB51185." evidence="8" ref="6">
    <original>V</original>
    <variation>L</variation>
    <location>
        <position position="235"/>
    </location>
</feature>
<feature type="sequence conflict" description="In Ref. 6; AAB51185." evidence="8" ref="6">
    <original>HA</original>
    <variation>SM</variation>
    <location>
        <begin position="296"/>
        <end position="297"/>
    </location>
</feature>
<feature type="sequence conflict" description="In Ref. 6; AAB51185." evidence="8" ref="6">
    <original>NQ</original>
    <variation>KP</variation>
    <location>
        <begin position="521"/>
        <end position="522"/>
    </location>
</feature>
<feature type="sequence conflict" description="In Ref. 6; AAB51185." evidence="8" ref="6">
    <original>DWTIKLWSLKDT</original>
    <variation>KIWSLKLPISSCQFSVVSGINSN</variation>
    <location>
        <begin position="537"/>
        <end position="548"/>
    </location>
</feature>
<feature type="sequence conflict" description="In Ref. 6; AAB51185." evidence="8" ref="6">
    <original>G</original>
    <variation>A</variation>
    <location>
        <position position="579"/>
    </location>
</feature>
<feature type="sequence conflict" description="In Ref. 6; AAB51185." evidence="8" ref="6">
    <original>E</original>
    <variation>K</variation>
    <location>
        <position position="593"/>
    </location>
</feature>
<feature type="sequence conflict" description="In Ref. 6; AAB51185." evidence="8" ref="6">
    <original>L</original>
    <variation>Q</variation>
    <location>
        <position position="628"/>
    </location>
</feature>
<feature type="sequence conflict" description="In Ref. 6; AAB51185." evidence="8" ref="6">
    <original>WSRFNTHLSEIKMNQSDEV</original>
    <variation>IKMNQSVRSRTI</variation>
    <location>
        <begin position="645"/>
        <end position="663"/>
    </location>
</feature>
<feature type="strand" evidence="10">
    <location>
        <begin position="110"/>
        <end position="112"/>
    </location>
</feature>
<feature type="strand" evidence="9">
    <location>
        <begin position="128"/>
        <end position="133"/>
    </location>
</feature>
<feature type="helix" evidence="11">
    <location>
        <begin position="244"/>
        <end position="251"/>
    </location>
</feature>
<feature type="helix" evidence="11">
    <location>
        <begin position="254"/>
        <end position="273"/>
    </location>
</feature>
<protein>
    <recommendedName>
        <fullName>Cytoplasmic dynein 1 intermediate chain</fullName>
        <shortName>DH IC</shortName>
    </recommendedName>
    <alternativeName>
        <fullName>Dynein intermediate chain, cytosolic</fullName>
    </alternativeName>
    <alternativeName>
        <fullName>Protein short wing</fullName>
    </alternativeName>
</protein>
<accession>Q24246</accession>
<accession>O96508</accession>
<accession>O96510</accession>
<accession>O96511</accession>
<accession>O96512</accession>
<accession>O96513</accession>
<accession>O96514</accession>
<accession>O96515</accession>
<accession>O96516</accession>
<accession>Q5U0Z1</accession>
<accession>Q86BQ5</accession>
<accession>Q9NG49</accession>
<accession>Q9TZR7</accession>
<accession>Q9TZR8</accession>
<accession>Q9TZR9</accession>
<accession>Q9TZS0</accession>
<accession>Q9VR78</accession>
<proteinExistence type="evidence at protein level"/>
<organism>
    <name type="scientific">Drosophila melanogaster</name>
    <name type="common">Fruit fly</name>
    <dbReference type="NCBI Taxonomy" id="7227"/>
    <lineage>
        <taxon>Eukaryota</taxon>
        <taxon>Metazoa</taxon>
        <taxon>Ecdysozoa</taxon>
        <taxon>Arthropoda</taxon>
        <taxon>Hexapoda</taxon>
        <taxon>Insecta</taxon>
        <taxon>Pterygota</taxon>
        <taxon>Neoptera</taxon>
        <taxon>Endopterygota</taxon>
        <taxon>Diptera</taxon>
        <taxon>Brachycera</taxon>
        <taxon>Muscomorpha</taxon>
        <taxon>Ephydroidea</taxon>
        <taxon>Drosophilidae</taxon>
        <taxon>Drosophila</taxon>
        <taxon>Sophophora</taxon>
    </lineage>
</organism>
<dbReference type="EMBL" id="AF070687">
    <property type="protein sequence ID" value="AAC78306.1"/>
    <property type="status" value="ALT_SEQ"/>
    <property type="molecule type" value="Genomic_DNA"/>
</dbReference>
<dbReference type="EMBL" id="AF070689">
    <property type="protein sequence ID" value="AAC70933.1"/>
    <property type="molecule type" value="mRNA"/>
</dbReference>
<dbReference type="EMBL" id="AF070690">
    <property type="protein sequence ID" value="AAC70934.1"/>
    <property type="molecule type" value="mRNA"/>
</dbReference>
<dbReference type="EMBL" id="AF070691">
    <property type="protein sequence ID" value="AAC70935.1"/>
    <property type="molecule type" value="mRNA"/>
</dbReference>
<dbReference type="EMBL" id="AF070692">
    <property type="protein sequence ID" value="AAC70936.1"/>
    <property type="molecule type" value="mRNA"/>
</dbReference>
<dbReference type="EMBL" id="AF070693">
    <property type="protein sequence ID" value="AAC70937.1"/>
    <property type="molecule type" value="mRNA"/>
</dbReference>
<dbReference type="EMBL" id="AF070694">
    <property type="protein sequence ID" value="AAC70938.1"/>
    <property type="molecule type" value="mRNA"/>
</dbReference>
<dbReference type="EMBL" id="AF070695">
    <property type="protein sequence ID" value="AAC70939.1"/>
    <property type="molecule type" value="mRNA"/>
</dbReference>
<dbReference type="EMBL" id="AF070696">
    <property type="protein sequence ID" value="AAC70940.1"/>
    <property type="molecule type" value="mRNA"/>
</dbReference>
<dbReference type="EMBL" id="AF070697">
    <property type="protein sequence ID" value="AAC70941.1"/>
    <property type="molecule type" value="mRNA"/>
</dbReference>
<dbReference type="EMBL" id="AF070698">
    <property type="protein sequence ID" value="AAC70942.1"/>
    <property type="status" value="ALT_SEQ"/>
    <property type="molecule type" value="mRNA"/>
</dbReference>
<dbReference type="EMBL" id="AF070699">
    <property type="protein sequence ID" value="AAC70943.1"/>
    <property type="molecule type" value="mRNA"/>
</dbReference>
<dbReference type="EMBL" id="AF263371">
    <property type="protein sequence ID" value="AAF73046.1"/>
    <property type="molecule type" value="mRNA"/>
</dbReference>
<dbReference type="EMBL" id="AE014298">
    <property type="protein sequence ID" value="AAF50928.2"/>
    <property type="molecule type" value="Genomic_DNA"/>
</dbReference>
<dbReference type="EMBL" id="AE014298">
    <property type="protein sequence ID" value="AAN09553.1"/>
    <property type="molecule type" value="Genomic_DNA"/>
</dbReference>
<dbReference type="EMBL" id="AE014298">
    <property type="protein sequence ID" value="AAN09554.1"/>
    <property type="molecule type" value="Genomic_DNA"/>
</dbReference>
<dbReference type="EMBL" id="AE014298">
    <property type="protein sequence ID" value="AAN09555.1"/>
    <property type="molecule type" value="Genomic_DNA"/>
</dbReference>
<dbReference type="EMBL" id="AE014298">
    <property type="protein sequence ID" value="AAN09556.1"/>
    <property type="molecule type" value="Genomic_DNA"/>
</dbReference>
<dbReference type="EMBL" id="AE014298">
    <property type="protein sequence ID" value="AAN09557.1"/>
    <property type="molecule type" value="Genomic_DNA"/>
</dbReference>
<dbReference type="EMBL" id="AE014298">
    <property type="protein sequence ID" value="AAN09558.1"/>
    <property type="molecule type" value="Genomic_DNA"/>
</dbReference>
<dbReference type="EMBL" id="AE014298">
    <property type="protein sequence ID" value="AAN09559.1"/>
    <property type="molecule type" value="Genomic_DNA"/>
</dbReference>
<dbReference type="EMBL" id="AE014298">
    <property type="protein sequence ID" value="AAN09560.1"/>
    <property type="molecule type" value="Genomic_DNA"/>
</dbReference>
<dbReference type="EMBL" id="AE014298">
    <property type="protein sequence ID" value="AAN09561.1"/>
    <property type="molecule type" value="Genomic_DNA"/>
</dbReference>
<dbReference type="EMBL" id="AE014298">
    <property type="protein sequence ID" value="AAN09562.1"/>
    <property type="molecule type" value="Genomic_DNA"/>
</dbReference>
<dbReference type="EMBL" id="BT016101">
    <property type="protein sequence ID" value="AAV36986.1"/>
    <property type="molecule type" value="mRNA"/>
</dbReference>
<dbReference type="EMBL" id="L41945">
    <property type="protein sequence ID" value="AAB51185.1"/>
    <property type="molecule type" value="Genomic_DNA"/>
</dbReference>
<dbReference type="RefSeq" id="NP_001285486.1">
    <molecule id="Q24246-2"/>
    <property type="nucleotide sequence ID" value="NM_001298557.1"/>
</dbReference>
<dbReference type="RefSeq" id="NP_477069.1">
    <molecule id="Q24246-5"/>
    <property type="nucleotide sequence ID" value="NM_057721.4"/>
</dbReference>
<dbReference type="RefSeq" id="NP_477070.1">
    <molecule id="Q24246-8"/>
    <property type="nucleotide sequence ID" value="NM_057722.4"/>
</dbReference>
<dbReference type="RefSeq" id="NP_477071.1">
    <molecule id="Q24246-9"/>
    <property type="nucleotide sequence ID" value="NM_057723.4"/>
</dbReference>
<dbReference type="RefSeq" id="NP_477072.1">
    <molecule id="Q24246-10"/>
    <property type="nucleotide sequence ID" value="NM_057724.4"/>
</dbReference>
<dbReference type="RefSeq" id="NP_477073.1">
    <molecule id="Q24246-12"/>
    <property type="nucleotide sequence ID" value="NM_057725.4"/>
</dbReference>
<dbReference type="RefSeq" id="NP_477074.1">
    <molecule id="Q24246-2"/>
    <property type="nucleotide sequence ID" value="NM_057726.4"/>
</dbReference>
<dbReference type="RefSeq" id="NP_477075.2">
    <molecule id="Q24246-11"/>
    <property type="nucleotide sequence ID" value="NM_057727.5"/>
</dbReference>
<dbReference type="RefSeq" id="NP_477076.1">
    <molecule id="Q24246-4"/>
    <property type="nucleotide sequence ID" value="NM_057728.4"/>
</dbReference>
<dbReference type="RefSeq" id="NP_477077.1">
    <molecule id="Q24246-3"/>
    <property type="nucleotide sequence ID" value="NM_057729.4"/>
</dbReference>
<dbReference type="RefSeq" id="NP_477078.1">
    <molecule id="Q24246-6"/>
    <property type="nucleotide sequence ID" value="NM_057730.5"/>
</dbReference>
<dbReference type="RefSeq" id="NP_477079.1">
    <molecule id="Q24246-7"/>
    <property type="nucleotide sequence ID" value="NM_057731.4"/>
</dbReference>
<dbReference type="RefSeq" id="NP_996521.1">
    <molecule id="Q24246-5"/>
    <property type="nucleotide sequence ID" value="NM_206798.2"/>
</dbReference>
<dbReference type="RefSeq" id="NP_996522.1">
    <molecule id="Q24246-5"/>
    <property type="nucleotide sequence ID" value="NM_206799.2"/>
</dbReference>
<dbReference type="PDB" id="2P2T">
    <property type="method" value="X-ray"/>
    <property type="resolution" value="3.00 A"/>
    <property type="chains" value="C=123-138"/>
</dbReference>
<dbReference type="PDB" id="3FM7">
    <property type="method" value="X-ray"/>
    <property type="resolution" value="3.50 A"/>
    <property type="chains" value="C/D=109-135"/>
</dbReference>
<dbReference type="PDB" id="3L9K">
    <property type="method" value="X-ray"/>
    <property type="resolution" value="3.00 A"/>
    <property type="chains" value="W/X/Y/Z=242-279"/>
</dbReference>
<dbReference type="PDBsum" id="2P2T"/>
<dbReference type="PDBsum" id="3FM7"/>
<dbReference type="PDBsum" id="3L9K"/>
<dbReference type="BMRB" id="Q24246"/>
<dbReference type="SMR" id="Q24246"/>
<dbReference type="BioGRID" id="68871">
    <property type="interactions" value="25"/>
</dbReference>
<dbReference type="DIP" id="DIP-19664N"/>
<dbReference type="ELM" id="Q24246"/>
<dbReference type="FunCoup" id="Q24246">
    <property type="interactions" value="892"/>
</dbReference>
<dbReference type="IntAct" id="Q24246">
    <property type="interactions" value="7"/>
</dbReference>
<dbReference type="STRING" id="7227.FBpp0088428"/>
<dbReference type="PaxDb" id="7227-FBpp0088428"/>
<dbReference type="DNASU" id="44160"/>
<dbReference type="EnsemblMetazoa" id="FBtr0089397">
    <molecule id="Q24246-2"/>
    <property type="protein sequence ID" value="FBpp0088419"/>
    <property type="gene ID" value="FBgn0003654"/>
</dbReference>
<dbReference type="EnsemblMetazoa" id="FBtr0089398">
    <molecule id="Q24246-3"/>
    <property type="protein sequence ID" value="FBpp0088420"/>
    <property type="gene ID" value="FBgn0003654"/>
</dbReference>
<dbReference type="EnsemblMetazoa" id="FBtr0089399">
    <molecule id="Q24246-4"/>
    <property type="protein sequence ID" value="FBpp0088421"/>
    <property type="gene ID" value="FBgn0003654"/>
</dbReference>
<dbReference type="EnsemblMetazoa" id="FBtr0089400">
    <molecule id="Q24246-5"/>
    <property type="protein sequence ID" value="FBpp0088422"/>
    <property type="gene ID" value="FBgn0003654"/>
</dbReference>
<dbReference type="EnsemblMetazoa" id="FBtr0089401">
    <molecule id="Q24246-6"/>
    <property type="protein sequence ID" value="FBpp0088423"/>
    <property type="gene ID" value="FBgn0003654"/>
</dbReference>
<dbReference type="EnsemblMetazoa" id="FBtr0089402">
    <molecule id="Q24246-7"/>
    <property type="protein sequence ID" value="FBpp0088424"/>
    <property type="gene ID" value="FBgn0003654"/>
</dbReference>
<dbReference type="EnsemblMetazoa" id="FBtr0089403">
    <molecule id="Q24246-8"/>
    <property type="protein sequence ID" value="FBpp0088425"/>
    <property type="gene ID" value="FBgn0003654"/>
</dbReference>
<dbReference type="EnsemblMetazoa" id="FBtr0089404">
    <molecule id="Q24246-9"/>
    <property type="protein sequence ID" value="FBpp0088426"/>
    <property type="gene ID" value="FBgn0003654"/>
</dbReference>
<dbReference type="EnsemblMetazoa" id="FBtr0089405">
    <molecule id="Q24246-10"/>
    <property type="protein sequence ID" value="FBpp0088427"/>
    <property type="gene ID" value="FBgn0003654"/>
</dbReference>
<dbReference type="EnsemblMetazoa" id="FBtr0089406">
    <molecule id="Q24246-11"/>
    <property type="protein sequence ID" value="FBpp0088428"/>
    <property type="gene ID" value="FBgn0003654"/>
</dbReference>
<dbReference type="EnsemblMetazoa" id="FBtr0089407">
    <molecule id="Q24246-12"/>
    <property type="protein sequence ID" value="FBpp0088429"/>
    <property type="gene ID" value="FBgn0003654"/>
</dbReference>
<dbReference type="EnsemblMetazoa" id="FBtr0089408">
    <molecule id="Q24246-5"/>
    <property type="protein sequence ID" value="FBpp0089020"/>
    <property type="gene ID" value="FBgn0003654"/>
</dbReference>
<dbReference type="EnsemblMetazoa" id="FBtr0089409">
    <molecule id="Q24246-5"/>
    <property type="protein sequence ID" value="FBpp0089021"/>
    <property type="gene ID" value="FBgn0003654"/>
</dbReference>
<dbReference type="EnsemblMetazoa" id="FBtr0340360">
    <molecule id="Q24246-2"/>
    <property type="protein sequence ID" value="FBpp0309318"/>
    <property type="gene ID" value="FBgn0003654"/>
</dbReference>
<dbReference type="GeneID" id="44160"/>
<dbReference type="KEGG" id="dme:Dmel_CG18000"/>
<dbReference type="AGR" id="FB:FBgn0003654"/>
<dbReference type="CTD" id="44160"/>
<dbReference type="FlyBase" id="FBgn0003654">
    <property type="gene designation" value="sw"/>
</dbReference>
<dbReference type="VEuPathDB" id="VectorBase:FBgn0003654"/>
<dbReference type="eggNOG" id="KOG1587">
    <property type="taxonomic scope" value="Eukaryota"/>
</dbReference>
<dbReference type="GeneTree" id="ENSGT00940000166605"/>
<dbReference type="InParanoid" id="Q24246"/>
<dbReference type="OMA" id="MHDRPEY"/>
<dbReference type="OrthoDB" id="4189at2759"/>
<dbReference type="PhylomeDB" id="Q24246"/>
<dbReference type="Reactome" id="R-DME-3371497">
    <property type="pathway name" value="HSP90 chaperone cycle for steroid hormone receptors (SHR) in the presence of ligand"/>
</dbReference>
<dbReference type="Reactome" id="R-DME-6807878">
    <property type="pathway name" value="COPI-mediated anterograde transport"/>
</dbReference>
<dbReference type="Reactome" id="R-DME-6811436">
    <property type="pathway name" value="COPI-independent Golgi-to-ER retrograde traffic"/>
</dbReference>
<dbReference type="Reactome" id="R-DME-9646399">
    <property type="pathway name" value="Aggrephagy"/>
</dbReference>
<dbReference type="SignaLink" id="Q24246"/>
<dbReference type="BioGRID-ORCS" id="44160">
    <property type="hits" value="0 hits in 3 CRISPR screens"/>
</dbReference>
<dbReference type="EvolutionaryTrace" id="Q24246"/>
<dbReference type="GenomeRNAi" id="44160"/>
<dbReference type="PRO" id="PR:Q24246"/>
<dbReference type="Proteomes" id="UP000000803">
    <property type="component" value="Chromosome X"/>
</dbReference>
<dbReference type="Bgee" id="FBgn0003654">
    <property type="expression patterns" value="Expressed in mechanosensory neuron of leg chordotonal organ in insect leg and 177 other cell types or tissues"/>
</dbReference>
<dbReference type="ExpressionAtlas" id="Q24246">
    <property type="expression patterns" value="baseline and differential"/>
</dbReference>
<dbReference type="GO" id="GO:0005868">
    <property type="term" value="C:cytoplasmic dynein complex"/>
    <property type="evidence" value="ECO:0000314"/>
    <property type="project" value="FlyBase"/>
</dbReference>
<dbReference type="GO" id="GO:0005765">
    <property type="term" value="C:lysosomal membrane"/>
    <property type="evidence" value="ECO:0007669"/>
    <property type="project" value="UniProtKB-SubCell"/>
</dbReference>
<dbReference type="GO" id="GO:0005874">
    <property type="term" value="C:microtubule"/>
    <property type="evidence" value="ECO:0007669"/>
    <property type="project" value="UniProtKB-KW"/>
</dbReference>
<dbReference type="GO" id="GO:0043005">
    <property type="term" value="C:neuron projection"/>
    <property type="evidence" value="ECO:0007669"/>
    <property type="project" value="GOC"/>
</dbReference>
<dbReference type="GO" id="GO:0031965">
    <property type="term" value="C:nuclear membrane"/>
    <property type="evidence" value="ECO:0007669"/>
    <property type="project" value="UniProtKB-SubCell"/>
</dbReference>
<dbReference type="GO" id="GO:0032991">
    <property type="term" value="C:protein-containing complex"/>
    <property type="evidence" value="ECO:0000315"/>
    <property type="project" value="CAFA"/>
</dbReference>
<dbReference type="GO" id="GO:0034452">
    <property type="term" value="F:dynactin binding"/>
    <property type="evidence" value="ECO:0000353"/>
    <property type="project" value="FlyBase"/>
</dbReference>
<dbReference type="GO" id="GO:0045504">
    <property type="term" value="F:dynein heavy chain binding"/>
    <property type="evidence" value="ECO:0000250"/>
    <property type="project" value="FlyBase"/>
</dbReference>
<dbReference type="GO" id="GO:0045503">
    <property type="term" value="F:dynein light chain binding"/>
    <property type="evidence" value="ECO:0000353"/>
    <property type="project" value="CAFA"/>
</dbReference>
<dbReference type="GO" id="GO:0060090">
    <property type="term" value="F:molecular adaptor activity"/>
    <property type="evidence" value="ECO:0000314"/>
    <property type="project" value="DisProt"/>
</dbReference>
<dbReference type="GO" id="GO:0008088">
    <property type="term" value="P:axo-dendritic transport"/>
    <property type="evidence" value="ECO:0000315"/>
    <property type="project" value="FlyBase"/>
</dbReference>
<dbReference type="GO" id="GO:0007349">
    <property type="term" value="P:cellularization"/>
    <property type="evidence" value="ECO:0000316"/>
    <property type="project" value="FlyBase"/>
</dbReference>
<dbReference type="GO" id="GO:0051642">
    <property type="term" value="P:centrosome localization"/>
    <property type="evidence" value="ECO:0000315"/>
    <property type="project" value="FlyBase"/>
</dbReference>
<dbReference type="GO" id="GO:0001754">
    <property type="term" value="P:eye photoreceptor cell differentiation"/>
    <property type="evidence" value="ECO:0000316"/>
    <property type="project" value="FlyBase"/>
</dbReference>
<dbReference type="GO" id="GO:0000226">
    <property type="term" value="P:microtubule cytoskeleton organization"/>
    <property type="evidence" value="ECO:0000315"/>
    <property type="project" value="FlyBase"/>
</dbReference>
<dbReference type="GO" id="GO:0007018">
    <property type="term" value="P:microtubule-based movement"/>
    <property type="evidence" value="ECO:0000314"/>
    <property type="project" value="FlyBase"/>
</dbReference>
<dbReference type="GO" id="GO:0034501">
    <property type="term" value="P:protein localization to kinetochore"/>
    <property type="evidence" value="ECO:0000315"/>
    <property type="project" value="FlyBase"/>
</dbReference>
<dbReference type="GO" id="GO:0007291">
    <property type="term" value="P:sperm individualization"/>
    <property type="evidence" value="ECO:0000315"/>
    <property type="project" value="FlyBase"/>
</dbReference>
<dbReference type="GO" id="GO:0007051">
    <property type="term" value="P:spindle organization"/>
    <property type="evidence" value="ECO:0000315"/>
    <property type="project" value="FlyBase"/>
</dbReference>
<dbReference type="GO" id="GO:0010970">
    <property type="term" value="P:transport along microtubule"/>
    <property type="evidence" value="ECO:0000318"/>
    <property type="project" value="GO_Central"/>
</dbReference>
<dbReference type="DisProt" id="DP00605"/>
<dbReference type="FunFam" id="2.130.10.10:FF:000552">
    <property type="entry name" value="Cytoplasmic dynein 1 intermediate chain"/>
    <property type="match status" value="1"/>
</dbReference>
<dbReference type="FunFam" id="2.130.10.10:FF:001109">
    <property type="entry name" value="Cytoplasmic dynein 1 intermediate chain"/>
    <property type="match status" value="1"/>
</dbReference>
<dbReference type="Gene3D" id="2.130.10.10">
    <property type="entry name" value="YVTN repeat-like/Quinoprotein amine dehydrogenase"/>
    <property type="match status" value="2"/>
</dbReference>
<dbReference type="IDEAL" id="IID50052"/>
<dbReference type="InterPro" id="IPR025956">
    <property type="entry name" value="DYNC1I1/DYNC1I2"/>
</dbReference>
<dbReference type="InterPro" id="IPR050687">
    <property type="entry name" value="Dynein_IC"/>
</dbReference>
<dbReference type="InterPro" id="IPR015943">
    <property type="entry name" value="WD40/YVTN_repeat-like_dom_sf"/>
</dbReference>
<dbReference type="InterPro" id="IPR036322">
    <property type="entry name" value="WD40_repeat_dom_sf"/>
</dbReference>
<dbReference type="InterPro" id="IPR001680">
    <property type="entry name" value="WD40_rpt"/>
</dbReference>
<dbReference type="PANTHER" id="PTHR12442:SF22">
    <property type="entry name" value="CYTOPLASMIC DYNEIN 1 INTERMEDIATE CHAIN-RELATED"/>
    <property type="match status" value="1"/>
</dbReference>
<dbReference type="PANTHER" id="PTHR12442">
    <property type="entry name" value="DYNEIN INTERMEDIATE CHAIN"/>
    <property type="match status" value="1"/>
</dbReference>
<dbReference type="Pfam" id="PF11540">
    <property type="entry name" value="Dynein_IC2"/>
    <property type="match status" value="1"/>
</dbReference>
<dbReference type="Pfam" id="PF00400">
    <property type="entry name" value="WD40"/>
    <property type="match status" value="1"/>
</dbReference>
<dbReference type="SMART" id="SM00320">
    <property type="entry name" value="WD40"/>
    <property type="match status" value="6"/>
</dbReference>
<dbReference type="SUPFAM" id="SSF50978">
    <property type="entry name" value="WD40 repeat-like"/>
    <property type="match status" value="1"/>
</dbReference>
<dbReference type="PROSITE" id="PS50082">
    <property type="entry name" value="WD_REPEATS_2"/>
    <property type="match status" value="1"/>
</dbReference>
<dbReference type="PROSITE" id="PS50294">
    <property type="entry name" value="WD_REPEATS_REGION"/>
    <property type="match status" value="1"/>
</dbReference>
<name>DYIN_DROME</name>
<gene>
    <name type="primary">sw</name>
    <name type="synonym">Cdic</name>
    <name type="synonym">Dic19B</name>
    <name type="ORF">CG18000</name>
</gene>
<evidence type="ECO:0000250" key="1"/>
<evidence type="ECO:0000256" key="2">
    <source>
        <dbReference type="SAM" id="MobiDB-lite"/>
    </source>
</evidence>
<evidence type="ECO:0000269" key="3">
    <source>
    </source>
</evidence>
<evidence type="ECO:0000269" key="4">
    <source>
    </source>
</evidence>
<evidence type="ECO:0000303" key="5">
    <source>
    </source>
</evidence>
<evidence type="ECO:0000303" key="6">
    <source>
    </source>
</evidence>
<evidence type="ECO:0000303" key="7">
    <source ref="5"/>
</evidence>
<evidence type="ECO:0000305" key="8"/>
<evidence type="ECO:0007829" key="9">
    <source>
        <dbReference type="PDB" id="2P2T"/>
    </source>
</evidence>
<evidence type="ECO:0007829" key="10">
    <source>
        <dbReference type="PDB" id="3FM7"/>
    </source>
</evidence>
<evidence type="ECO:0007829" key="11">
    <source>
        <dbReference type="PDB" id="3L9K"/>
    </source>
</evidence>
<keyword id="KW-0002">3D-structure</keyword>
<keyword id="KW-0025">Alternative splicing</keyword>
<keyword id="KW-0963">Cytoplasm</keyword>
<keyword id="KW-0206">Cytoskeleton</keyword>
<keyword id="KW-0243">Dynein</keyword>
<keyword id="KW-0458">Lysosome</keyword>
<keyword id="KW-0472">Membrane</keyword>
<keyword id="KW-0493">Microtubule</keyword>
<keyword id="KW-0505">Motor protein</keyword>
<keyword id="KW-0539">Nucleus</keyword>
<keyword id="KW-1185">Reference proteome</keyword>
<keyword id="KW-0677">Repeat</keyword>
<keyword id="KW-0813">Transport</keyword>
<keyword id="KW-0853">WD repeat</keyword>
<comment type="function">
    <text evidence="1 3">Acts as one of several non-catalytic accessory components of the cytoplasmic dynein 1 complex that are thought to be involved in linking dynein to cargos and to adapter proteins that regulate dynein function. Cytoplasmic dynein 1 acts as a motor for the intracellular retrograde motility of vesicles and organelles along microtubules. The intermediate chains mediate the help dynein bind to dynactin 150 kDa component (By similarity).</text>
</comment>
<comment type="subunit">
    <text evidence="1">Homodimer. The cytoplasmic dynein 1 complex consists of two catalytic heavy chains (HCs) and a number of non-catalytic subunits presented by intermediate chains (ICs), light intermediate chains (LICs) and light chains (LCs).</text>
</comment>
<comment type="subcellular location">
    <subcellularLocation>
        <location evidence="4">Cytoplasm</location>
        <location evidence="4">Cytoskeleton</location>
    </subcellularLocation>
</comment>
<comment type="subcellular location">
    <molecule>Isoform 2c</molecule>
    <subcellularLocation>
        <location>Lysosome membrane</location>
        <topology>Peripheral membrane protein</topology>
        <orientation>Cytoplasmic side</orientation>
    </subcellularLocation>
    <text>Aggregates in cytoplasm around lysosomes.</text>
</comment>
<comment type="subcellular location">
    <molecule>Isoform 2a</molecule>
    <subcellularLocation>
        <location>Nucleus membrane</location>
        <topology>Peripheral membrane protein</topology>
        <orientation>Cytoplasmic side</orientation>
    </subcellularLocation>
    <text>Aggregates in cytoplasm around the nucleus.</text>
</comment>
<comment type="subcellular location">
    <molecule>Isoform 2b</molecule>
    <subcellularLocation>
        <location>Nucleus membrane</location>
        <topology>Peripheral membrane protein</topology>
        <orientation>Cytoplasmic side</orientation>
    </subcellularLocation>
    <text>Aggregates in cytoplasm around the nucleus.</text>
</comment>
<comment type="alternative products">
    <event type="alternative splicing"/>
    <isoform>
        <id>Q24246-11</id>
        <name>5a</name>
        <name>J</name>
        <sequence type="displayed"/>
    </isoform>
    <isoform>
        <id>Q24246-2</id>
        <name>1a</name>
        <name>A</name>
        <sequence type="described" ref="VSP_001345"/>
    </isoform>
    <isoform>
        <id>Q24246-3</id>
        <name>1b</name>
        <name>B</name>
        <sequence type="described" ref="VSP_001346"/>
    </isoform>
    <isoform>
        <id>Q24246-4</id>
        <name>1c</name>
        <name>C</name>
        <sequence type="described" ref="VSP_001347"/>
    </isoform>
    <isoform>
        <id>Q24246-5</id>
        <name>2a</name>
        <name>D</name>
        <sequence type="described" ref="VSP_007686 VSP_001348"/>
    </isoform>
    <isoform>
        <id>Q24246-6</id>
        <name>2b</name>
        <name>E</name>
        <sequence type="described" ref="VSP_007686"/>
    </isoform>
    <isoform>
        <id>Q24246-7</id>
        <name>2c</name>
        <name>F</name>
        <sequence type="described" ref="VSP_007686 VSP_007687"/>
    </isoform>
    <isoform>
        <id>Q24246-8</id>
        <name>3a</name>
        <name>G</name>
        <sequence type="described" ref="VSP_001342 VSP_001348"/>
    </isoform>
    <isoform>
        <id>Q24246-9</id>
        <name>3b</name>
        <name>H</name>
        <sequence type="described" ref="VSP_001342"/>
    </isoform>
    <isoform>
        <id>Q24246-10</id>
        <name>4</name>
        <name>I</name>
        <sequence type="described" ref="VSP_001343"/>
    </isoform>
    <isoform>
        <id>Q24246-12</id>
        <name>5b</name>
        <name>K</name>
        <sequence type="described" ref="VSP_007685"/>
    </isoform>
</comment>
<comment type="tissue specificity">
    <text evidence="3 4">High levels of isoform 1b, isoform 1c, isoform 3a and isoform 4 accumulate in early egg chambers and at stage 9 become concentrated at the posterior of the oocyte. Isoform 5a and isoform 5b are highly expressed in adult head and to a lesser extent in adult torso. Isoform 1a, isoform 2a and isoform 2b are found in all tissues examined, including ovaries, midgut, torso and head.</text>
</comment>
<comment type="developmental stage">
    <text evidence="4">Expressed both maternally and zygotically. Abundant in embryos and adults, low levels in larva and pupae. Isoform 1a, isoform 2a and isoform 2b are constitutively expressed at high levels and isoform 2c at low levels in embryos and adults.</text>
</comment>
<comment type="similarity">
    <text evidence="8">Belongs to the dynein intermediate chain family.</text>
</comment>
<comment type="sequence caution" evidence="8">
    <conflict type="erroneous gene model prediction">
        <sequence resource="EMBL-CDS" id="AAC70942"/>
    </conflict>
</comment>
<comment type="sequence caution" evidence="8">
    <conflict type="erroneous gene model prediction">
        <sequence resource="EMBL-CDS" id="AAC78306"/>
    </conflict>
</comment>
<reference key="1">
    <citation type="journal article" date="1998" name="Mol. Cell. Biol.">
        <title>Cytoplasmic dynein intermediate-chain isoforms with different targeting properties created by tissue-specific alternative splicing.</title>
        <authorList>
            <person name="Nurminsky D.I."/>
            <person name="Nurminskaya M.V."/>
            <person name="Benevolenskaya E.V."/>
            <person name="Shevelyov Y.Y."/>
            <person name="Hartl D.L."/>
            <person name="Gvozdev V.A."/>
        </authorList>
    </citation>
    <scope>NUCLEOTIDE SEQUENCE [GENOMIC DNA / MRNA] (ISOFORMS 1A; 1B; 1C; 2A; 2B; 2C; 3A; 3B; 4; 5A AND 5B)</scope>
    <scope>SUBCELLULAR LOCATION</scope>
    <scope>TISSUE SPECIFICITY</scope>
    <scope>DEVELOPMENTAL STAGE</scope>
    <source>
        <tissue>Ovary</tissue>
    </source>
</reference>
<reference key="2">
    <citation type="journal article" date="2000" name="Mol. Biol. Cell">
        <title>A molecular genetic analysis of the interaction between the cytoplasmic dynein intermediate chain and the glued (Dynactin) complex.</title>
        <authorList>
            <person name="Boylan K."/>
            <person name="Serr M."/>
            <person name="Hays T.S."/>
        </authorList>
    </citation>
    <scope>NUCLEOTIDE SEQUENCE [MRNA] (ISOFORM 2B)</scope>
    <scope>FUNCTION</scope>
    <scope>TISSUE SPECIFICITY</scope>
    <source>
        <tissue>Ovary</tissue>
    </source>
</reference>
<reference key="3">
    <citation type="journal article" date="2000" name="Science">
        <title>The genome sequence of Drosophila melanogaster.</title>
        <authorList>
            <person name="Adams M.D."/>
            <person name="Celniker S.E."/>
            <person name="Holt R.A."/>
            <person name="Evans C.A."/>
            <person name="Gocayne J.D."/>
            <person name="Amanatides P.G."/>
            <person name="Scherer S.E."/>
            <person name="Li P.W."/>
            <person name="Hoskins R.A."/>
            <person name="Galle R.F."/>
            <person name="George R.A."/>
            <person name="Lewis S.E."/>
            <person name="Richards S."/>
            <person name="Ashburner M."/>
            <person name="Henderson S.N."/>
            <person name="Sutton G.G."/>
            <person name="Wortman J.R."/>
            <person name="Yandell M.D."/>
            <person name="Zhang Q."/>
            <person name="Chen L.X."/>
            <person name="Brandon R.C."/>
            <person name="Rogers Y.-H.C."/>
            <person name="Blazej R.G."/>
            <person name="Champe M."/>
            <person name="Pfeiffer B.D."/>
            <person name="Wan K.H."/>
            <person name="Doyle C."/>
            <person name="Baxter E.G."/>
            <person name="Helt G."/>
            <person name="Nelson C.R."/>
            <person name="Miklos G.L.G."/>
            <person name="Abril J.F."/>
            <person name="Agbayani A."/>
            <person name="An H.-J."/>
            <person name="Andrews-Pfannkoch C."/>
            <person name="Baldwin D."/>
            <person name="Ballew R.M."/>
            <person name="Basu A."/>
            <person name="Baxendale J."/>
            <person name="Bayraktaroglu L."/>
            <person name="Beasley E.M."/>
            <person name="Beeson K.Y."/>
            <person name="Benos P.V."/>
            <person name="Berman B.P."/>
            <person name="Bhandari D."/>
            <person name="Bolshakov S."/>
            <person name="Borkova D."/>
            <person name="Botchan M.R."/>
            <person name="Bouck J."/>
            <person name="Brokstein P."/>
            <person name="Brottier P."/>
            <person name="Burtis K.C."/>
            <person name="Busam D.A."/>
            <person name="Butler H."/>
            <person name="Cadieu E."/>
            <person name="Center A."/>
            <person name="Chandra I."/>
            <person name="Cherry J.M."/>
            <person name="Cawley S."/>
            <person name="Dahlke C."/>
            <person name="Davenport L.B."/>
            <person name="Davies P."/>
            <person name="de Pablos B."/>
            <person name="Delcher A."/>
            <person name="Deng Z."/>
            <person name="Mays A.D."/>
            <person name="Dew I."/>
            <person name="Dietz S.M."/>
            <person name="Dodson K."/>
            <person name="Doup L.E."/>
            <person name="Downes M."/>
            <person name="Dugan-Rocha S."/>
            <person name="Dunkov B.C."/>
            <person name="Dunn P."/>
            <person name="Durbin K.J."/>
            <person name="Evangelista C.C."/>
            <person name="Ferraz C."/>
            <person name="Ferriera S."/>
            <person name="Fleischmann W."/>
            <person name="Fosler C."/>
            <person name="Gabrielian A.E."/>
            <person name="Garg N.S."/>
            <person name="Gelbart W.M."/>
            <person name="Glasser K."/>
            <person name="Glodek A."/>
            <person name="Gong F."/>
            <person name="Gorrell J.H."/>
            <person name="Gu Z."/>
            <person name="Guan P."/>
            <person name="Harris M."/>
            <person name="Harris N.L."/>
            <person name="Harvey D.A."/>
            <person name="Heiman T.J."/>
            <person name="Hernandez J.R."/>
            <person name="Houck J."/>
            <person name="Hostin D."/>
            <person name="Houston K.A."/>
            <person name="Howland T.J."/>
            <person name="Wei M.-H."/>
            <person name="Ibegwam C."/>
            <person name="Jalali M."/>
            <person name="Kalush F."/>
            <person name="Karpen G.H."/>
            <person name="Ke Z."/>
            <person name="Kennison J.A."/>
            <person name="Ketchum K.A."/>
            <person name="Kimmel B.E."/>
            <person name="Kodira C.D."/>
            <person name="Kraft C.L."/>
            <person name="Kravitz S."/>
            <person name="Kulp D."/>
            <person name="Lai Z."/>
            <person name="Lasko P."/>
            <person name="Lei Y."/>
            <person name="Levitsky A.A."/>
            <person name="Li J.H."/>
            <person name="Li Z."/>
            <person name="Liang Y."/>
            <person name="Lin X."/>
            <person name="Liu X."/>
            <person name="Mattei B."/>
            <person name="McIntosh T.C."/>
            <person name="McLeod M.P."/>
            <person name="McPherson D."/>
            <person name="Merkulov G."/>
            <person name="Milshina N.V."/>
            <person name="Mobarry C."/>
            <person name="Morris J."/>
            <person name="Moshrefi A."/>
            <person name="Mount S.M."/>
            <person name="Moy M."/>
            <person name="Murphy B."/>
            <person name="Murphy L."/>
            <person name="Muzny D.M."/>
            <person name="Nelson D.L."/>
            <person name="Nelson D.R."/>
            <person name="Nelson K.A."/>
            <person name="Nixon K."/>
            <person name="Nusskern D.R."/>
            <person name="Pacleb J.M."/>
            <person name="Palazzolo M."/>
            <person name="Pittman G.S."/>
            <person name="Pan S."/>
            <person name="Pollard J."/>
            <person name="Puri V."/>
            <person name="Reese M.G."/>
            <person name="Reinert K."/>
            <person name="Remington K."/>
            <person name="Saunders R.D.C."/>
            <person name="Scheeler F."/>
            <person name="Shen H."/>
            <person name="Shue B.C."/>
            <person name="Siden-Kiamos I."/>
            <person name="Simpson M."/>
            <person name="Skupski M.P."/>
            <person name="Smith T.J."/>
            <person name="Spier E."/>
            <person name="Spradling A.C."/>
            <person name="Stapleton M."/>
            <person name="Strong R."/>
            <person name="Sun E."/>
            <person name="Svirskas R."/>
            <person name="Tector C."/>
            <person name="Turner R."/>
            <person name="Venter E."/>
            <person name="Wang A.H."/>
            <person name="Wang X."/>
            <person name="Wang Z.-Y."/>
            <person name="Wassarman D.A."/>
            <person name="Weinstock G.M."/>
            <person name="Weissenbach J."/>
            <person name="Williams S.M."/>
            <person name="Woodage T."/>
            <person name="Worley K.C."/>
            <person name="Wu D."/>
            <person name="Yang S."/>
            <person name="Yao Q.A."/>
            <person name="Ye J."/>
            <person name="Yeh R.-F."/>
            <person name="Zaveri J.S."/>
            <person name="Zhan M."/>
            <person name="Zhang G."/>
            <person name="Zhao Q."/>
            <person name="Zheng L."/>
            <person name="Zheng X.H."/>
            <person name="Zhong F.N."/>
            <person name="Zhong W."/>
            <person name="Zhou X."/>
            <person name="Zhu S.C."/>
            <person name="Zhu X."/>
            <person name="Smith H.O."/>
            <person name="Gibbs R.A."/>
            <person name="Myers E.W."/>
            <person name="Rubin G.M."/>
            <person name="Venter J.C."/>
        </authorList>
    </citation>
    <scope>NUCLEOTIDE SEQUENCE [LARGE SCALE GENOMIC DNA]</scope>
    <source>
        <strain>Berkeley</strain>
    </source>
</reference>
<reference key="4">
    <citation type="journal article" date="2002" name="Genome Biol.">
        <title>Annotation of the Drosophila melanogaster euchromatic genome: a systematic review.</title>
        <authorList>
            <person name="Misra S."/>
            <person name="Crosby M.A."/>
            <person name="Mungall C.J."/>
            <person name="Matthews B.B."/>
            <person name="Campbell K.S."/>
            <person name="Hradecky P."/>
            <person name="Huang Y."/>
            <person name="Kaminker J.S."/>
            <person name="Millburn G.H."/>
            <person name="Prochnik S.E."/>
            <person name="Smith C.D."/>
            <person name="Tupy J.L."/>
            <person name="Whitfield E.J."/>
            <person name="Bayraktaroglu L."/>
            <person name="Berman B.P."/>
            <person name="Bettencourt B.R."/>
            <person name="Celniker S.E."/>
            <person name="de Grey A.D.N.J."/>
            <person name="Drysdale R.A."/>
            <person name="Harris N.L."/>
            <person name="Richter J."/>
            <person name="Russo S."/>
            <person name="Schroeder A.J."/>
            <person name="Shu S.Q."/>
            <person name="Stapleton M."/>
            <person name="Yamada C."/>
            <person name="Ashburner M."/>
            <person name="Gelbart W.M."/>
            <person name="Rubin G.M."/>
            <person name="Lewis S.E."/>
        </authorList>
    </citation>
    <scope>GENOME REANNOTATION</scope>
    <scope>ALTERNATIVE SPLICING</scope>
    <source>
        <strain>Berkeley</strain>
    </source>
</reference>
<reference key="5">
    <citation type="submission" date="2004-10" db="EMBL/GenBank/DDBJ databases">
        <authorList>
            <person name="Stapleton M."/>
            <person name="Carlson J.W."/>
            <person name="Chavez C."/>
            <person name="Frise E."/>
            <person name="George R.A."/>
            <person name="Pacleb J.M."/>
            <person name="Park S."/>
            <person name="Wan K.H."/>
            <person name="Yu C."/>
            <person name="Rubin G.M."/>
            <person name="Celniker S.E."/>
        </authorList>
    </citation>
    <scope>NUCLEOTIDE SEQUENCE [LARGE SCALE MRNA] (ISOFORM 1B)</scope>
    <source>
        <strain>Berkeley</strain>
        <tissue>Embryo</tissue>
    </source>
</reference>
<reference key="6">
    <citation type="submission" date="1995-05" db="EMBL/GenBank/DDBJ databases">
        <title>Cluster of tandem repeats in Drosophila genome comprising putative genes encoding cytoplasmic dynein intermediate chain and 3'-part of annexin X.</title>
        <authorList>
            <person name="Benevolenskaya E.V."/>
            <person name="Gvozdev V.A."/>
        </authorList>
    </citation>
    <scope>NUCLEOTIDE SEQUENCE [GENOMIC DNA] OF 101-663 (ISOFORM 4)</scope>
    <source>
        <strain>GT WA</strain>
    </source>
</reference>
<sequence>MDRKAELERKKAKLAALREEKDRRRREKEIKDMEEAAGRIGGGAGIDKDQRKDLDEMLSSLGVAPVSEVLSSLSSVNSMTSDNSNTQTPDASLQATVNGQSGGKKQPLNLSVYNVQATNIPPKETLVYTKQTQTTSTGGGNGDVLSCHSSPLSGYMEDWWRPRKAHATDYYDEYNLNPGLEWEDEFTDDEESSLQNLGNGFTSKLPPGYLTHGLPTVKDVAPAITPLEIKKETEVKKEVNELSEEQKQMIILSENFQRFVVRAGRVIERALSENVDIYTDYIGGGDSEEANDERSHARLSLNRVFYDERWSKNRCITSMDWSTHFPELVVGSYHNNEESPNEPDGVVMVWNTKFKKSTPEDVFHCQSAVMSTCFAKFNPNLILGGTYSGQIVLWDNRVQKRTPIQRTPLSAAAHTHPVYCLQMVGTQNAHNVISISSDGKLCSWSLDMLSQPQDTLELQQRQSKAIAITSMAFPANEINSLVMGSEDGYVYSASRHGLRSGVNEVYERHLGPITGISTHYNQLSPDFGHLFLTSSIDWTIKLWSLKDTKPLYSFEDNSDYVMDVAWSPVHPALFAAVDGSGRLDLWNLNQDTEVPTASIVVAGAPALNRVSWTPSGLHVCIGDEAGKLYVYDVAENLAQPSRDEWSRFNTHLSEIKMNQSDEV</sequence>